<dbReference type="EC" id="1.8.4.8" evidence="1"/>
<dbReference type="EMBL" id="CP000647">
    <property type="protein sequence ID" value="ABR78518.1"/>
    <property type="molecule type" value="Genomic_DNA"/>
</dbReference>
<dbReference type="RefSeq" id="WP_002915177.1">
    <property type="nucleotide sequence ID" value="NC_009648.1"/>
</dbReference>
<dbReference type="SMR" id="A6TD47"/>
<dbReference type="STRING" id="272620.KPN_03117"/>
<dbReference type="PaxDb" id="272620-KPN_03117"/>
<dbReference type="EnsemblBacteria" id="ABR78518">
    <property type="protein sequence ID" value="ABR78518"/>
    <property type="gene ID" value="KPN_03117"/>
</dbReference>
<dbReference type="KEGG" id="kpn:KPN_03117"/>
<dbReference type="HOGENOM" id="CLU_044089_3_0_6"/>
<dbReference type="UniPathway" id="UPA00140">
    <property type="reaction ID" value="UER00206"/>
</dbReference>
<dbReference type="Proteomes" id="UP000000265">
    <property type="component" value="Chromosome"/>
</dbReference>
<dbReference type="GO" id="GO:0005737">
    <property type="term" value="C:cytoplasm"/>
    <property type="evidence" value="ECO:0007669"/>
    <property type="project" value="UniProtKB-SubCell"/>
</dbReference>
<dbReference type="GO" id="GO:0004604">
    <property type="term" value="F:phosphoadenylyl-sulfate reductase (thioredoxin) activity"/>
    <property type="evidence" value="ECO:0007669"/>
    <property type="project" value="UniProtKB-UniRule"/>
</dbReference>
<dbReference type="GO" id="GO:0070814">
    <property type="term" value="P:hydrogen sulfide biosynthetic process"/>
    <property type="evidence" value="ECO:0007669"/>
    <property type="project" value="UniProtKB-UniRule"/>
</dbReference>
<dbReference type="GO" id="GO:0019379">
    <property type="term" value="P:sulfate assimilation, phosphoadenylyl sulfate reduction by phosphoadenylyl-sulfate reductase (thioredoxin)"/>
    <property type="evidence" value="ECO:0007669"/>
    <property type="project" value="UniProtKB-UniRule"/>
</dbReference>
<dbReference type="CDD" id="cd23945">
    <property type="entry name" value="PAPS_reductase"/>
    <property type="match status" value="1"/>
</dbReference>
<dbReference type="FunFam" id="3.40.50.620:FF:000043">
    <property type="entry name" value="Phosphoadenosine phosphosulfate reductase"/>
    <property type="match status" value="1"/>
</dbReference>
<dbReference type="Gene3D" id="3.40.50.620">
    <property type="entry name" value="HUPs"/>
    <property type="match status" value="1"/>
</dbReference>
<dbReference type="HAMAP" id="MF_00063">
    <property type="entry name" value="CysH"/>
    <property type="match status" value="1"/>
</dbReference>
<dbReference type="InterPro" id="IPR004511">
    <property type="entry name" value="PAPS/APS_Rdtase"/>
</dbReference>
<dbReference type="InterPro" id="IPR002500">
    <property type="entry name" value="PAPS_reduct_dom"/>
</dbReference>
<dbReference type="InterPro" id="IPR011800">
    <property type="entry name" value="PAPS_reductase_CysH"/>
</dbReference>
<dbReference type="InterPro" id="IPR014729">
    <property type="entry name" value="Rossmann-like_a/b/a_fold"/>
</dbReference>
<dbReference type="NCBIfam" id="TIGR00434">
    <property type="entry name" value="cysH"/>
    <property type="match status" value="1"/>
</dbReference>
<dbReference type="NCBIfam" id="TIGR02057">
    <property type="entry name" value="PAPS_reductase"/>
    <property type="match status" value="1"/>
</dbReference>
<dbReference type="NCBIfam" id="NF002537">
    <property type="entry name" value="PRK02090.1"/>
    <property type="match status" value="1"/>
</dbReference>
<dbReference type="PANTHER" id="PTHR46509">
    <property type="entry name" value="PHOSPHOADENOSINE PHOSPHOSULFATE REDUCTASE"/>
    <property type="match status" value="1"/>
</dbReference>
<dbReference type="PANTHER" id="PTHR46509:SF1">
    <property type="entry name" value="PHOSPHOADENOSINE PHOSPHOSULFATE REDUCTASE"/>
    <property type="match status" value="1"/>
</dbReference>
<dbReference type="Pfam" id="PF01507">
    <property type="entry name" value="PAPS_reduct"/>
    <property type="match status" value="1"/>
</dbReference>
<dbReference type="PIRSF" id="PIRSF000857">
    <property type="entry name" value="PAPS_reductase"/>
    <property type="match status" value="1"/>
</dbReference>
<dbReference type="SUPFAM" id="SSF52402">
    <property type="entry name" value="Adenine nucleotide alpha hydrolases-like"/>
    <property type="match status" value="1"/>
</dbReference>
<organism>
    <name type="scientific">Klebsiella pneumoniae subsp. pneumoniae (strain ATCC 700721 / MGH 78578)</name>
    <dbReference type="NCBI Taxonomy" id="272620"/>
    <lineage>
        <taxon>Bacteria</taxon>
        <taxon>Pseudomonadati</taxon>
        <taxon>Pseudomonadota</taxon>
        <taxon>Gammaproteobacteria</taxon>
        <taxon>Enterobacterales</taxon>
        <taxon>Enterobacteriaceae</taxon>
        <taxon>Klebsiella/Raoultella group</taxon>
        <taxon>Klebsiella</taxon>
        <taxon>Klebsiella pneumoniae complex</taxon>
    </lineage>
</organism>
<protein>
    <recommendedName>
        <fullName evidence="1">Phosphoadenosine 5'-phosphosulfate reductase</fullName>
        <shortName evidence="1">PAPS reductase</shortName>
        <ecNumber evidence="1">1.8.4.8</ecNumber>
    </recommendedName>
    <alternativeName>
        <fullName evidence="1">3'-phosphoadenylylsulfate reductase</fullName>
    </alternativeName>
    <alternativeName>
        <fullName evidence="1">PAPS reductase, thioredoxin dependent</fullName>
    </alternativeName>
    <alternativeName>
        <fullName evidence="1">PAPS sulfotransferase</fullName>
    </alternativeName>
    <alternativeName>
        <fullName evidence="1">PAdoPS reductase</fullName>
    </alternativeName>
</protein>
<name>CYSH_KLEP7</name>
<proteinExistence type="inferred from homology"/>
<gene>
    <name evidence="1" type="primary">cysH</name>
    <name type="ordered locus">KPN78578_30570</name>
    <name type="ORF">KPN_03117</name>
</gene>
<keyword id="KW-0963">Cytoplasm</keyword>
<keyword id="KW-0560">Oxidoreductase</keyword>
<feature type="chain" id="PRO_1000008928" description="Phosphoadenosine 5'-phosphosulfate reductase">
    <location>
        <begin position="1"/>
        <end position="244"/>
    </location>
</feature>
<feature type="active site" description="Nucleophile; cysteine thiosulfonate intermediate" evidence="1">
    <location>
        <position position="239"/>
    </location>
</feature>
<sequence>MSVLDLNALNALPKVERILALAETNAQLEKLDAEGRVAWALENLPGNYVLSSSFGIQAAVSLHLVNQIRPDIPVILTDTGYLFPETYQFIDELTDKLKLNLKVYRAAESAAWQEARYGKLWEQGVEGIEKYNEINKVEPMNRALKELNAQTWFAGLRREQSGSRATLPVLAVQRGVFKVLPIIDWDNRTVYQYLQKHGLKYHPLWDQGYLSVGDTHTTRKWEPGMAEEETRFFGLKRECGLHEG</sequence>
<reference key="1">
    <citation type="submission" date="2006-09" db="EMBL/GenBank/DDBJ databases">
        <authorList>
            <consortium name="The Klebsiella pneumonia Genome Sequencing Project"/>
            <person name="McClelland M."/>
            <person name="Sanderson E.K."/>
            <person name="Spieth J."/>
            <person name="Clifton W.S."/>
            <person name="Latreille P."/>
            <person name="Sabo A."/>
            <person name="Pepin K."/>
            <person name="Bhonagiri V."/>
            <person name="Porwollik S."/>
            <person name="Ali J."/>
            <person name="Wilson R.K."/>
        </authorList>
    </citation>
    <scope>NUCLEOTIDE SEQUENCE [LARGE SCALE GENOMIC DNA]</scope>
    <source>
        <strain>ATCC 700721 / MGH 78578</strain>
    </source>
</reference>
<evidence type="ECO:0000255" key="1">
    <source>
        <dbReference type="HAMAP-Rule" id="MF_00063"/>
    </source>
</evidence>
<comment type="function">
    <text evidence="1">Catalyzes the formation of sulfite from phosphoadenosine 5'-phosphosulfate (PAPS) using thioredoxin as an electron donor.</text>
</comment>
<comment type="catalytic activity">
    <reaction evidence="1">
        <text>[thioredoxin]-disulfide + sulfite + adenosine 3',5'-bisphosphate + 2 H(+) = [thioredoxin]-dithiol + 3'-phosphoadenylyl sulfate</text>
        <dbReference type="Rhea" id="RHEA:11724"/>
        <dbReference type="Rhea" id="RHEA-COMP:10698"/>
        <dbReference type="Rhea" id="RHEA-COMP:10700"/>
        <dbReference type="ChEBI" id="CHEBI:15378"/>
        <dbReference type="ChEBI" id="CHEBI:17359"/>
        <dbReference type="ChEBI" id="CHEBI:29950"/>
        <dbReference type="ChEBI" id="CHEBI:50058"/>
        <dbReference type="ChEBI" id="CHEBI:58339"/>
        <dbReference type="ChEBI" id="CHEBI:58343"/>
        <dbReference type="EC" id="1.8.4.8"/>
    </reaction>
</comment>
<comment type="pathway">
    <text evidence="1">Sulfur metabolism; hydrogen sulfide biosynthesis; sulfite from sulfate: step 3/3.</text>
</comment>
<comment type="subcellular location">
    <subcellularLocation>
        <location evidence="1">Cytoplasm</location>
    </subcellularLocation>
</comment>
<comment type="similarity">
    <text evidence="1">Belongs to the PAPS reductase family. CysH subfamily.</text>
</comment>
<accession>A6TD47</accession>